<organism>
    <name type="scientific">Rhizobium leguminosarum bv. trifolii (strain WSM2304)</name>
    <dbReference type="NCBI Taxonomy" id="395492"/>
    <lineage>
        <taxon>Bacteria</taxon>
        <taxon>Pseudomonadati</taxon>
        <taxon>Pseudomonadota</taxon>
        <taxon>Alphaproteobacteria</taxon>
        <taxon>Hyphomicrobiales</taxon>
        <taxon>Rhizobiaceae</taxon>
        <taxon>Rhizobium/Agrobacterium group</taxon>
        <taxon>Rhizobium</taxon>
    </lineage>
</organism>
<keyword id="KW-1185">Reference proteome</keyword>
<reference key="1">
    <citation type="journal article" date="2010" name="Stand. Genomic Sci.">
        <title>Complete genome sequence of Rhizobium leguminosarum bv trifolii strain WSM2304, an effective microsymbiont of the South American clover Trifolium polymorphum.</title>
        <authorList>
            <person name="Reeve W."/>
            <person name="O'Hara G."/>
            <person name="Chain P."/>
            <person name="Ardley J."/>
            <person name="Brau L."/>
            <person name="Nandesena K."/>
            <person name="Tiwari R."/>
            <person name="Malfatti S."/>
            <person name="Kiss H."/>
            <person name="Lapidus A."/>
            <person name="Copeland A."/>
            <person name="Nolan M."/>
            <person name="Land M."/>
            <person name="Ivanova N."/>
            <person name="Mavromatis K."/>
            <person name="Markowitz V."/>
            <person name="Kyrpides N."/>
            <person name="Melino V."/>
            <person name="Denton M."/>
            <person name="Yates R."/>
            <person name="Howieson J."/>
        </authorList>
    </citation>
    <scope>NUCLEOTIDE SEQUENCE [LARGE SCALE GENOMIC DNA]</scope>
    <source>
        <strain>WSM2304</strain>
    </source>
</reference>
<feature type="chain" id="PRO_1000130703" description="UPF0235 protein Rleg2_3707">
    <location>
        <begin position="1"/>
        <end position="103"/>
    </location>
</feature>
<sequence>MNRPWKKSDDHVRLAIRLTPNGGRDAIDGAETDGEGEAYLKTRVTTVPEKGKANKALILLIAKSLGIAKSSVSLVSGDTARKKILRIDGDPEDLGKKLETLLG</sequence>
<evidence type="ECO:0000255" key="1">
    <source>
        <dbReference type="HAMAP-Rule" id="MF_00634"/>
    </source>
</evidence>
<name>Y3707_RHILW</name>
<gene>
    <name type="ordered locus">Rleg2_3707</name>
</gene>
<proteinExistence type="inferred from homology"/>
<accession>B5ZTD4</accession>
<comment type="similarity">
    <text evidence="1">Belongs to the UPF0235 family.</text>
</comment>
<dbReference type="EMBL" id="CP001191">
    <property type="protein sequence ID" value="ACI56970.1"/>
    <property type="molecule type" value="Genomic_DNA"/>
</dbReference>
<dbReference type="RefSeq" id="WP_012559228.1">
    <property type="nucleotide sequence ID" value="NC_011369.1"/>
</dbReference>
<dbReference type="SMR" id="B5ZTD4"/>
<dbReference type="STRING" id="395492.Rleg2_3707"/>
<dbReference type="KEGG" id="rlt:Rleg2_3707"/>
<dbReference type="eggNOG" id="COG1872">
    <property type="taxonomic scope" value="Bacteria"/>
</dbReference>
<dbReference type="HOGENOM" id="CLU_130694_3_0_5"/>
<dbReference type="Proteomes" id="UP000008330">
    <property type="component" value="Chromosome"/>
</dbReference>
<dbReference type="Gene3D" id="3.30.1200.10">
    <property type="entry name" value="YggU-like"/>
    <property type="match status" value="1"/>
</dbReference>
<dbReference type="HAMAP" id="MF_00634">
    <property type="entry name" value="UPF0235"/>
    <property type="match status" value="1"/>
</dbReference>
<dbReference type="InterPro" id="IPR003746">
    <property type="entry name" value="DUF167"/>
</dbReference>
<dbReference type="InterPro" id="IPR036591">
    <property type="entry name" value="YggU-like_sf"/>
</dbReference>
<dbReference type="NCBIfam" id="TIGR00251">
    <property type="entry name" value="DUF167 family protein"/>
    <property type="match status" value="1"/>
</dbReference>
<dbReference type="NCBIfam" id="NF002348">
    <property type="entry name" value="PRK01310.1"/>
    <property type="match status" value="1"/>
</dbReference>
<dbReference type="Pfam" id="PF02594">
    <property type="entry name" value="DUF167"/>
    <property type="match status" value="1"/>
</dbReference>
<dbReference type="SMART" id="SM01152">
    <property type="entry name" value="DUF167"/>
    <property type="match status" value="1"/>
</dbReference>
<dbReference type="SUPFAM" id="SSF69786">
    <property type="entry name" value="YggU-like"/>
    <property type="match status" value="1"/>
</dbReference>
<protein>
    <recommendedName>
        <fullName evidence="1">UPF0235 protein Rleg2_3707</fullName>
    </recommendedName>
</protein>